<evidence type="ECO:0000255" key="1">
    <source>
        <dbReference type="HAMAP-Rule" id="MF_00083"/>
    </source>
</evidence>
<comment type="function">
    <text evidence="1">Hydrolyzes ribosome-free peptidyl-tRNAs (with 1 or more amino acids incorporated), which drop off the ribosome during protein synthesis, or as a result of ribosome stalling.</text>
</comment>
<comment type="function">
    <text evidence="1">Catalyzes the release of premature peptidyl moieties from peptidyl-tRNA molecules trapped in stalled 50S ribosomal subunits, and thus maintains levels of free tRNAs and 50S ribosomes.</text>
</comment>
<comment type="catalytic activity">
    <reaction evidence="1">
        <text>an N-acyl-L-alpha-aminoacyl-tRNA + H2O = an N-acyl-L-amino acid + a tRNA + H(+)</text>
        <dbReference type="Rhea" id="RHEA:54448"/>
        <dbReference type="Rhea" id="RHEA-COMP:10123"/>
        <dbReference type="Rhea" id="RHEA-COMP:13883"/>
        <dbReference type="ChEBI" id="CHEBI:15377"/>
        <dbReference type="ChEBI" id="CHEBI:15378"/>
        <dbReference type="ChEBI" id="CHEBI:59874"/>
        <dbReference type="ChEBI" id="CHEBI:78442"/>
        <dbReference type="ChEBI" id="CHEBI:138191"/>
        <dbReference type="EC" id="3.1.1.29"/>
    </reaction>
</comment>
<comment type="subunit">
    <text evidence="1">Monomer.</text>
</comment>
<comment type="subcellular location">
    <subcellularLocation>
        <location evidence="1">Cytoplasm</location>
    </subcellularLocation>
</comment>
<comment type="similarity">
    <text evidence="1">Belongs to the PTH family.</text>
</comment>
<sequence>MANLKLLLVGIGNPGQKYVHNRHNIGFVILDSLLDSSSVSYQTNSKYSLARTDEDGVTIFYLKPLEFMNLSGKSVAEIAKKNGISPENILIIHDEIDFEFGKLKLKGGGGHAGHNGLRNIVEKLGTNTFFRLRFGVGKPSITSEVPDYVLSNFLPNEKEKIPELVKVSLQKISDWIRERKNGFQKLSDNQ</sequence>
<reference key="1">
    <citation type="journal article" date="2003" name="Nature">
        <title>Unique physiological and pathogenic features of Leptospira interrogans revealed by whole-genome sequencing.</title>
        <authorList>
            <person name="Ren S.-X."/>
            <person name="Fu G."/>
            <person name="Jiang X.-G."/>
            <person name="Zeng R."/>
            <person name="Miao Y.-G."/>
            <person name="Xu H."/>
            <person name="Zhang Y.-X."/>
            <person name="Xiong H."/>
            <person name="Lu G."/>
            <person name="Lu L.-F."/>
            <person name="Jiang H.-Q."/>
            <person name="Jia J."/>
            <person name="Tu Y.-F."/>
            <person name="Jiang J.-X."/>
            <person name="Gu W.-Y."/>
            <person name="Zhang Y.-Q."/>
            <person name="Cai Z."/>
            <person name="Sheng H.-H."/>
            <person name="Yin H.-F."/>
            <person name="Zhang Y."/>
            <person name="Zhu G.-F."/>
            <person name="Wan M."/>
            <person name="Huang H.-L."/>
            <person name="Qian Z."/>
            <person name="Wang S.-Y."/>
            <person name="Ma W."/>
            <person name="Yao Z.-J."/>
            <person name="Shen Y."/>
            <person name="Qiang B.-Q."/>
            <person name="Xia Q.-C."/>
            <person name="Guo X.-K."/>
            <person name="Danchin A."/>
            <person name="Saint Girons I."/>
            <person name="Somerville R.L."/>
            <person name="Wen Y.-M."/>
            <person name="Shi M.-H."/>
            <person name="Chen Z."/>
            <person name="Xu J.-G."/>
            <person name="Zhao G.-P."/>
        </authorList>
    </citation>
    <scope>NUCLEOTIDE SEQUENCE [LARGE SCALE GENOMIC DNA]</scope>
    <source>
        <strain>56601</strain>
    </source>
</reference>
<proteinExistence type="inferred from homology"/>
<protein>
    <recommendedName>
        <fullName evidence="1">Peptidyl-tRNA hydrolase</fullName>
        <shortName evidence="1">Pth</shortName>
        <ecNumber evidence="1">3.1.1.29</ecNumber>
    </recommendedName>
</protein>
<keyword id="KW-0963">Cytoplasm</keyword>
<keyword id="KW-0378">Hydrolase</keyword>
<keyword id="KW-1185">Reference proteome</keyword>
<keyword id="KW-0694">RNA-binding</keyword>
<keyword id="KW-0820">tRNA-binding</keyword>
<accession>Q8F3Q2</accession>
<name>PTH_LEPIN</name>
<feature type="chain" id="PRO_0000187762" description="Peptidyl-tRNA hydrolase">
    <location>
        <begin position="1"/>
        <end position="190"/>
    </location>
</feature>
<feature type="active site" description="Proton acceptor" evidence="1">
    <location>
        <position position="23"/>
    </location>
</feature>
<feature type="binding site" evidence="1">
    <location>
        <position position="18"/>
    </location>
    <ligand>
        <name>tRNA</name>
        <dbReference type="ChEBI" id="CHEBI:17843"/>
    </ligand>
</feature>
<feature type="binding site" evidence="1">
    <location>
        <position position="67"/>
    </location>
    <ligand>
        <name>tRNA</name>
        <dbReference type="ChEBI" id="CHEBI:17843"/>
    </ligand>
</feature>
<feature type="binding site" evidence="1">
    <location>
        <position position="69"/>
    </location>
    <ligand>
        <name>tRNA</name>
        <dbReference type="ChEBI" id="CHEBI:17843"/>
    </ligand>
</feature>
<feature type="binding site" evidence="1">
    <location>
        <position position="115"/>
    </location>
    <ligand>
        <name>tRNA</name>
        <dbReference type="ChEBI" id="CHEBI:17843"/>
    </ligand>
</feature>
<feature type="site" description="Discriminates between blocked and unblocked aminoacyl-tRNA" evidence="1">
    <location>
        <position position="13"/>
    </location>
</feature>
<feature type="site" description="Stabilizes the basic form of H active site to accept a proton" evidence="1">
    <location>
        <position position="94"/>
    </location>
</feature>
<dbReference type="EC" id="3.1.1.29" evidence="1"/>
<dbReference type="EMBL" id="AE010300">
    <property type="protein sequence ID" value="AAN49548.1"/>
    <property type="molecule type" value="Genomic_DNA"/>
</dbReference>
<dbReference type="RefSeq" id="NP_712530.1">
    <property type="nucleotide sequence ID" value="NC_004342.2"/>
</dbReference>
<dbReference type="RefSeq" id="WP_001284985.1">
    <property type="nucleotide sequence ID" value="NC_004342.2"/>
</dbReference>
<dbReference type="SMR" id="Q8F3Q2"/>
<dbReference type="FunCoup" id="Q8F3Q2">
    <property type="interactions" value="356"/>
</dbReference>
<dbReference type="STRING" id="189518.LA_2349"/>
<dbReference type="PaxDb" id="189518-LA_2349"/>
<dbReference type="EnsemblBacteria" id="AAN49548">
    <property type="protein sequence ID" value="AAN49548"/>
    <property type="gene ID" value="LA_2349"/>
</dbReference>
<dbReference type="GeneID" id="61144895"/>
<dbReference type="KEGG" id="lil:LA_2349"/>
<dbReference type="PATRIC" id="fig|189518.3.peg.2332"/>
<dbReference type="HOGENOM" id="CLU_062456_3_1_12"/>
<dbReference type="InParanoid" id="Q8F3Q2"/>
<dbReference type="OrthoDB" id="9800507at2"/>
<dbReference type="Proteomes" id="UP000001408">
    <property type="component" value="Chromosome I"/>
</dbReference>
<dbReference type="GO" id="GO:0005737">
    <property type="term" value="C:cytoplasm"/>
    <property type="evidence" value="ECO:0007669"/>
    <property type="project" value="UniProtKB-SubCell"/>
</dbReference>
<dbReference type="GO" id="GO:0004045">
    <property type="term" value="F:peptidyl-tRNA hydrolase activity"/>
    <property type="evidence" value="ECO:0000318"/>
    <property type="project" value="GO_Central"/>
</dbReference>
<dbReference type="GO" id="GO:0000049">
    <property type="term" value="F:tRNA binding"/>
    <property type="evidence" value="ECO:0007669"/>
    <property type="project" value="UniProtKB-UniRule"/>
</dbReference>
<dbReference type="GO" id="GO:0006515">
    <property type="term" value="P:protein quality control for misfolded or incompletely synthesized proteins"/>
    <property type="evidence" value="ECO:0007669"/>
    <property type="project" value="UniProtKB-UniRule"/>
</dbReference>
<dbReference type="GO" id="GO:0072344">
    <property type="term" value="P:rescue of stalled ribosome"/>
    <property type="evidence" value="ECO:0007669"/>
    <property type="project" value="UniProtKB-UniRule"/>
</dbReference>
<dbReference type="CDD" id="cd00462">
    <property type="entry name" value="PTH"/>
    <property type="match status" value="1"/>
</dbReference>
<dbReference type="FunFam" id="3.40.50.1470:FF:000001">
    <property type="entry name" value="Peptidyl-tRNA hydrolase"/>
    <property type="match status" value="1"/>
</dbReference>
<dbReference type="Gene3D" id="3.40.50.1470">
    <property type="entry name" value="Peptidyl-tRNA hydrolase"/>
    <property type="match status" value="1"/>
</dbReference>
<dbReference type="HAMAP" id="MF_00083">
    <property type="entry name" value="Pept_tRNA_hydro_bact"/>
    <property type="match status" value="1"/>
</dbReference>
<dbReference type="InterPro" id="IPR001328">
    <property type="entry name" value="Pept_tRNA_hydro"/>
</dbReference>
<dbReference type="InterPro" id="IPR018171">
    <property type="entry name" value="Pept_tRNA_hydro_CS"/>
</dbReference>
<dbReference type="InterPro" id="IPR036416">
    <property type="entry name" value="Pept_tRNA_hydro_sf"/>
</dbReference>
<dbReference type="NCBIfam" id="TIGR00447">
    <property type="entry name" value="pth"/>
    <property type="match status" value="1"/>
</dbReference>
<dbReference type="PANTHER" id="PTHR17224">
    <property type="entry name" value="PEPTIDYL-TRNA HYDROLASE"/>
    <property type="match status" value="1"/>
</dbReference>
<dbReference type="PANTHER" id="PTHR17224:SF1">
    <property type="entry name" value="PEPTIDYL-TRNA HYDROLASE"/>
    <property type="match status" value="1"/>
</dbReference>
<dbReference type="Pfam" id="PF01195">
    <property type="entry name" value="Pept_tRNA_hydro"/>
    <property type="match status" value="1"/>
</dbReference>
<dbReference type="SUPFAM" id="SSF53178">
    <property type="entry name" value="Peptidyl-tRNA hydrolase-like"/>
    <property type="match status" value="1"/>
</dbReference>
<dbReference type="PROSITE" id="PS01195">
    <property type="entry name" value="PEPT_TRNA_HYDROL_1"/>
    <property type="match status" value="1"/>
</dbReference>
<dbReference type="PROSITE" id="PS01196">
    <property type="entry name" value="PEPT_TRNA_HYDROL_2"/>
    <property type="match status" value="1"/>
</dbReference>
<gene>
    <name evidence="1" type="primary">pth</name>
    <name type="ordered locus">LA_2349</name>
</gene>
<organism>
    <name type="scientific">Leptospira interrogans serogroup Icterohaemorrhagiae serovar Lai (strain 56601)</name>
    <dbReference type="NCBI Taxonomy" id="189518"/>
    <lineage>
        <taxon>Bacteria</taxon>
        <taxon>Pseudomonadati</taxon>
        <taxon>Spirochaetota</taxon>
        <taxon>Spirochaetia</taxon>
        <taxon>Leptospirales</taxon>
        <taxon>Leptospiraceae</taxon>
        <taxon>Leptospira</taxon>
    </lineage>
</organism>